<proteinExistence type="inferred from homology"/>
<feature type="chain" id="PRO_0000294351" description="Proline-rich protein 15-like protein">
    <location>
        <begin position="1"/>
        <end position="100"/>
    </location>
</feature>
<feature type="region of interest" description="Disordered" evidence="1">
    <location>
        <begin position="26"/>
        <end position="100"/>
    </location>
</feature>
<feature type="compositionally biased region" description="Basic and acidic residues" evidence="1">
    <location>
        <begin position="53"/>
        <end position="62"/>
    </location>
</feature>
<protein>
    <recommendedName>
        <fullName>Proline-rich protein 15-like protein</fullName>
    </recommendedName>
    <alternativeName>
        <fullName>Protein ATAD4</fullName>
    </alternativeName>
</protein>
<accession>Q3T183</accession>
<sequence length="100" mass="11378">MTEVGWWKLTFLRKKKSTPKVLYEIPDTYTQSEGGAEPPRPDSGNPNSNFNTRLEKIVDKNTKGKHVKVSNSGRFKEKKKVRASLAENPNLFDDREGKGQ</sequence>
<organism>
    <name type="scientific">Bos taurus</name>
    <name type="common">Bovine</name>
    <dbReference type="NCBI Taxonomy" id="9913"/>
    <lineage>
        <taxon>Eukaryota</taxon>
        <taxon>Metazoa</taxon>
        <taxon>Chordata</taxon>
        <taxon>Craniata</taxon>
        <taxon>Vertebrata</taxon>
        <taxon>Euteleostomi</taxon>
        <taxon>Mammalia</taxon>
        <taxon>Eutheria</taxon>
        <taxon>Laurasiatheria</taxon>
        <taxon>Artiodactyla</taxon>
        <taxon>Ruminantia</taxon>
        <taxon>Pecora</taxon>
        <taxon>Bovidae</taxon>
        <taxon>Bovinae</taxon>
        <taxon>Bos</taxon>
    </lineage>
</organism>
<dbReference type="EMBL" id="BC102073">
    <property type="protein sequence ID" value="AAI02074.1"/>
    <property type="molecule type" value="mRNA"/>
</dbReference>
<dbReference type="RefSeq" id="NP_001029966.1">
    <property type="nucleotide sequence ID" value="NM_001034794.2"/>
</dbReference>
<dbReference type="RefSeq" id="XP_010814475.1">
    <property type="nucleotide sequence ID" value="XM_010816173.4"/>
</dbReference>
<dbReference type="RefSeq" id="XP_015314274.2">
    <property type="nucleotide sequence ID" value="XM_015458788.3"/>
</dbReference>
<dbReference type="FunCoup" id="Q3T183">
    <property type="interactions" value="81"/>
</dbReference>
<dbReference type="STRING" id="9913.ENSBTAP00000072637"/>
<dbReference type="PaxDb" id="9913-ENSBTAP00000016243"/>
<dbReference type="Ensembl" id="ENSBTAT00000136018.1">
    <property type="protein sequence ID" value="ENSBTAP00000094869.1"/>
    <property type="gene ID" value="ENSBTAG00000012249.4"/>
</dbReference>
<dbReference type="GeneID" id="616622"/>
<dbReference type="KEGG" id="bta:616622"/>
<dbReference type="CTD" id="79170"/>
<dbReference type="VEuPathDB" id="HostDB:ENSBTAG00000012249"/>
<dbReference type="VGNC" id="VGNC:33394">
    <property type="gene designation" value="PRR15L"/>
</dbReference>
<dbReference type="eggNOG" id="ENOG502S3QC">
    <property type="taxonomic scope" value="Eukaryota"/>
</dbReference>
<dbReference type="GeneTree" id="ENSGT00940000154534"/>
<dbReference type="HOGENOM" id="CLU_144251_0_0_1"/>
<dbReference type="InParanoid" id="Q3T183"/>
<dbReference type="OMA" id="STGWWKL"/>
<dbReference type="OrthoDB" id="9937618at2759"/>
<dbReference type="TreeFam" id="TF333189"/>
<dbReference type="Proteomes" id="UP000009136">
    <property type="component" value="Chromosome 19"/>
</dbReference>
<dbReference type="Bgee" id="ENSBTAG00000012249">
    <property type="expression patterns" value="Expressed in thyroid gland and 93 other cell types or tissues"/>
</dbReference>
<dbReference type="InterPro" id="IPR028237">
    <property type="entry name" value="PRR15"/>
</dbReference>
<dbReference type="PANTHER" id="PTHR14581">
    <property type="match status" value="1"/>
</dbReference>
<dbReference type="PANTHER" id="PTHR14581:SF5">
    <property type="entry name" value="PROLINE-RICH PROTEIN 15-LIKE PROTEIN"/>
    <property type="match status" value="1"/>
</dbReference>
<dbReference type="Pfam" id="PF15321">
    <property type="entry name" value="ATAD4"/>
    <property type="match status" value="1"/>
</dbReference>
<keyword id="KW-1185">Reference proteome</keyword>
<evidence type="ECO:0000256" key="1">
    <source>
        <dbReference type="SAM" id="MobiDB-lite"/>
    </source>
</evidence>
<evidence type="ECO:0000305" key="2"/>
<name>PR15L_BOVIN</name>
<reference key="1">
    <citation type="submission" date="2005-08" db="EMBL/GenBank/DDBJ databases">
        <authorList>
            <consortium name="NIH - Mammalian Gene Collection (MGC) project"/>
        </authorList>
    </citation>
    <scope>NUCLEOTIDE SEQUENCE [LARGE SCALE MRNA]</scope>
    <source>
        <strain>Crossbred X Angus</strain>
        <tissue>Ileum</tissue>
    </source>
</reference>
<gene>
    <name type="primary">PRR15L</name>
    <name type="synonym">ATAD4</name>
</gene>
<comment type="similarity">
    <text evidence="2">Belongs to the PRR15 family.</text>
</comment>